<keyword id="KW-0131">Cell cycle</keyword>
<keyword id="KW-0132">Cell division</keyword>
<keyword id="KW-0997">Cell inner membrane</keyword>
<keyword id="KW-1003">Cell membrane</keyword>
<keyword id="KW-0133">Cell shape</keyword>
<keyword id="KW-0961">Cell wall biogenesis/degradation</keyword>
<keyword id="KW-0328">Glycosyltransferase</keyword>
<keyword id="KW-0472">Membrane</keyword>
<keyword id="KW-0573">Peptidoglycan synthesis</keyword>
<keyword id="KW-1185">Reference proteome</keyword>
<keyword id="KW-0808">Transferase</keyword>
<name>MURG_PSYA2</name>
<reference key="1">
    <citation type="journal article" date="2010" name="Appl. Environ. Microbiol.">
        <title>The genome sequence of Psychrobacter arcticus 273-4, a psychroactive Siberian permafrost bacterium, reveals mechanisms for adaptation to low-temperature growth.</title>
        <authorList>
            <person name="Ayala-del-Rio H.L."/>
            <person name="Chain P.S."/>
            <person name="Grzymski J.J."/>
            <person name="Ponder M.A."/>
            <person name="Ivanova N."/>
            <person name="Bergholz P.W."/>
            <person name="Di Bartolo G."/>
            <person name="Hauser L."/>
            <person name="Land M."/>
            <person name="Bakermans C."/>
            <person name="Rodrigues D."/>
            <person name="Klappenbach J."/>
            <person name="Zarka D."/>
            <person name="Larimer F."/>
            <person name="Richardson P."/>
            <person name="Murray A."/>
            <person name="Thomashow M."/>
            <person name="Tiedje J.M."/>
        </authorList>
    </citation>
    <scope>NUCLEOTIDE SEQUENCE [LARGE SCALE GENOMIC DNA]</scope>
    <source>
        <strain>DSM 17307 / VKM B-2377 / 273-4</strain>
    </source>
</reference>
<organism>
    <name type="scientific">Psychrobacter arcticus (strain DSM 17307 / VKM B-2377 / 273-4)</name>
    <dbReference type="NCBI Taxonomy" id="259536"/>
    <lineage>
        <taxon>Bacteria</taxon>
        <taxon>Pseudomonadati</taxon>
        <taxon>Pseudomonadota</taxon>
        <taxon>Gammaproteobacteria</taxon>
        <taxon>Moraxellales</taxon>
        <taxon>Moraxellaceae</taxon>
        <taxon>Psychrobacter</taxon>
    </lineage>
</organism>
<accession>Q4FQV9</accession>
<sequence length="361" mass="38723">MKTPHILMMAAGTGGHVFPALAVSEELSKRGAIIHWLGTPNGMENGLVAPTGYPFHAIEMQGLRGKGIGRLLKMPVTLLSATMAVIKIIRGNKIDMVVGFGGYVSAPGGIAARLTKTPLIIHEQNAIAGMSNRYLAKMATKVLQAFENTFGNDQLDAKLETVGNPVRNAISGVAEPTIRYDINDQSPLKLLVVGGSLGAQVLNDTVPKALALIERPFEVRHQCGRHNEVTTQSAYASEDLSAHEFTVQPFIDDMAAAYNWADIVVCRAGALTVTEIQNVGIAAIFVPLPSAVDDHQTANARTLTLHKAAILLPQNELTPKRLSDELALLDRAACLEMAKKGHALANRQACQHVADIIWQAL</sequence>
<protein>
    <recommendedName>
        <fullName evidence="1">UDP-N-acetylglucosamine--N-acetylmuramyl-(pentapeptide) pyrophosphoryl-undecaprenol N-acetylglucosamine transferase</fullName>
        <ecNumber evidence="1">2.4.1.227</ecNumber>
    </recommendedName>
    <alternativeName>
        <fullName evidence="1">Undecaprenyl-PP-MurNAc-pentapeptide-UDPGlcNAc GlcNAc transferase</fullName>
    </alternativeName>
</protein>
<feature type="chain" id="PRO_0000225086" description="UDP-N-acetylglucosamine--N-acetylmuramyl-(pentapeptide) pyrophosphoryl-undecaprenol N-acetylglucosamine transferase">
    <location>
        <begin position="1"/>
        <end position="361"/>
    </location>
</feature>
<feature type="binding site" evidence="1">
    <location>
        <begin position="13"/>
        <end position="15"/>
    </location>
    <ligand>
        <name>UDP-N-acetyl-alpha-D-glucosamine</name>
        <dbReference type="ChEBI" id="CHEBI:57705"/>
    </ligand>
</feature>
<feature type="binding site" evidence="1">
    <location>
        <position position="125"/>
    </location>
    <ligand>
        <name>UDP-N-acetyl-alpha-D-glucosamine</name>
        <dbReference type="ChEBI" id="CHEBI:57705"/>
    </ligand>
</feature>
<feature type="binding site" evidence="1">
    <location>
        <position position="167"/>
    </location>
    <ligand>
        <name>UDP-N-acetyl-alpha-D-glucosamine</name>
        <dbReference type="ChEBI" id="CHEBI:57705"/>
    </ligand>
</feature>
<feature type="binding site" evidence="1">
    <location>
        <position position="196"/>
    </location>
    <ligand>
        <name>UDP-N-acetyl-alpha-D-glucosamine</name>
        <dbReference type="ChEBI" id="CHEBI:57705"/>
    </ligand>
</feature>
<feature type="binding site" evidence="1">
    <location>
        <position position="251"/>
    </location>
    <ligand>
        <name>UDP-N-acetyl-alpha-D-glucosamine</name>
        <dbReference type="ChEBI" id="CHEBI:57705"/>
    </ligand>
</feature>
<feature type="binding site" evidence="1">
    <location>
        <begin position="270"/>
        <end position="275"/>
    </location>
    <ligand>
        <name>UDP-N-acetyl-alpha-D-glucosamine</name>
        <dbReference type="ChEBI" id="CHEBI:57705"/>
    </ligand>
</feature>
<feature type="binding site" evidence="1">
    <location>
        <position position="296"/>
    </location>
    <ligand>
        <name>UDP-N-acetyl-alpha-D-glucosamine</name>
        <dbReference type="ChEBI" id="CHEBI:57705"/>
    </ligand>
</feature>
<comment type="function">
    <text evidence="1">Cell wall formation. Catalyzes the transfer of a GlcNAc subunit on undecaprenyl-pyrophosphoryl-MurNAc-pentapeptide (lipid intermediate I) to form undecaprenyl-pyrophosphoryl-MurNAc-(pentapeptide)GlcNAc (lipid intermediate II).</text>
</comment>
<comment type="catalytic activity">
    <reaction evidence="1">
        <text>di-trans,octa-cis-undecaprenyl diphospho-N-acetyl-alpha-D-muramoyl-L-alanyl-D-glutamyl-meso-2,6-diaminopimeloyl-D-alanyl-D-alanine + UDP-N-acetyl-alpha-D-glucosamine = di-trans,octa-cis-undecaprenyl diphospho-[N-acetyl-alpha-D-glucosaminyl-(1-&gt;4)]-N-acetyl-alpha-D-muramoyl-L-alanyl-D-glutamyl-meso-2,6-diaminopimeloyl-D-alanyl-D-alanine + UDP + H(+)</text>
        <dbReference type="Rhea" id="RHEA:31227"/>
        <dbReference type="ChEBI" id="CHEBI:15378"/>
        <dbReference type="ChEBI" id="CHEBI:57705"/>
        <dbReference type="ChEBI" id="CHEBI:58223"/>
        <dbReference type="ChEBI" id="CHEBI:61387"/>
        <dbReference type="ChEBI" id="CHEBI:61388"/>
        <dbReference type="EC" id="2.4.1.227"/>
    </reaction>
</comment>
<comment type="pathway">
    <text evidence="1">Cell wall biogenesis; peptidoglycan biosynthesis.</text>
</comment>
<comment type="subcellular location">
    <subcellularLocation>
        <location evidence="1">Cell inner membrane</location>
        <topology evidence="1">Peripheral membrane protein</topology>
        <orientation evidence="1">Cytoplasmic side</orientation>
    </subcellularLocation>
</comment>
<comment type="similarity">
    <text evidence="1">Belongs to the glycosyltransferase 28 family. MurG subfamily.</text>
</comment>
<gene>
    <name evidence="1" type="primary">murG</name>
    <name type="ordered locus">Psyc_1751</name>
</gene>
<evidence type="ECO:0000255" key="1">
    <source>
        <dbReference type="HAMAP-Rule" id="MF_00033"/>
    </source>
</evidence>
<proteinExistence type="inferred from homology"/>
<dbReference type="EC" id="2.4.1.227" evidence="1"/>
<dbReference type="EMBL" id="CP000082">
    <property type="protein sequence ID" value="AAZ19599.1"/>
    <property type="molecule type" value="Genomic_DNA"/>
</dbReference>
<dbReference type="RefSeq" id="WP_011281011.1">
    <property type="nucleotide sequence ID" value="NC_007204.1"/>
</dbReference>
<dbReference type="SMR" id="Q4FQV9"/>
<dbReference type="STRING" id="259536.Psyc_1751"/>
<dbReference type="CAZy" id="GT28">
    <property type="family name" value="Glycosyltransferase Family 28"/>
</dbReference>
<dbReference type="KEGG" id="par:Psyc_1751"/>
<dbReference type="eggNOG" id="COG0707">
    <property type="taxonomic scope" value="Bacteria"/>
</dbReference>
<dbReference type="HOGENOM" id="CLU_037404_2_0_6"/>
<dbReference type="OrthoDB" id="9808936at2"/>
<dbReference type="UniPathway" id="UPA00219"/>
<dbReference type="Proteomes" id="UP000000546">
    <property type="component" value="Chromosome"/>
</dbReference>
<dbReference type="GO" id="GO:0005886">
    <property type="term" value="C:plasma membrane"/>
    <property type="evidence" value="ECO:0007669"/>
    <property type="project" value="UniProtKB-SubCell"/>
</dbReference>
<dbReference type="GO" id="GO:0051991">
    <property type="term" value="F:UDP-N-acetyl-D-glucosamine:N-acetylmuramoyl-L-alanyl-D-glutamyl-meso-2,6-diaminopimelyl-D-alanyl-D-alanine-diphosphoundecaprenol 4-beta-N-acetylglucosaminlytransferase activity"/>
    <property type="evidence" value="ECO:0007669"/>
    <property type="project" value="RHEA"/>
</dbReference>
<dbReference type="GO" id="GO:0050511">
    <property type="term" value="F:undecaprenyldiphospho-muramoylpentapeptide beta-N-acetylglucosaminyltransferase activity"/>
    <property type="evidence" value="ECO:0007669"/>
    <property type="project" value="UniProtKB-UniRule"/>
</dbReference>
<dbReference type="GO" id="GO:0005975">
    <property type="term" value="P:carbohydrate metabolic process"/>
    <property type="evidence" value="ECO:0007669"/>
    <property type="project" value="InterPro"/>
</dbReference>
<dbReference type="GO" id="GO:0051301">
    <property type="term" value="P:cell division"/>
    <property type="evidence" value="ECO:0007669"/>
    <property type="project" value="UniProtKB-KW"/>
</dbReference>
<dbReference type="GO" id="GO:0071555">
    <property type="term" value="P:cell wall organization"/>
    <property type="evidence" value="ECO:0007669"/>
    <property type="project" value="UniProtKB-KW"/>
</dbReference>
<dbReference type="GO" id="GO:0030259">
    <property type="term" value="P:lipid glycosylation"/>
    <property type="evidence" value="ECO:0007669"/>
    <property type="project" value="UniProtKB-UniRule"/>
</dbReference>
<dbReference type="GO" id="GO:0009252">
    <property type="term" value="P:peptidoglycan biosynthetic process"/>
    <property type="evidence" value="ECO:0007669"/>
    <property type="project" value="UniProtKB-UniRule"/>
</dbReference>
<dbReference type="GO" id="GO:0008360">
    <property type="term" value="P:regulation of cell shape"/>
    <property type="evidence" value="ECO:0007669"/>
    <property type="project" value="UniProtKB-KW"/>
</dbReference>
<dbReference type="CDD" id="cd03785">
    <property type="entry name" value="GT28_MurG"/>
    <property type="match status" value="1"/>
</dbReference>
<dbReference type="Gene3D" id="3.40.50.2000">
    <property type="entry name" value="Glycogen Phosphorylase B"/>
    <property type="match status" value="2"/>
</dbReference>
<dbReference type="HAMAP" id="MF_00033">
    <property type="entry name" value="MurG"/>
    <property type="match status" value="1"/>
</dbReference>
<dbReference type="InterPro" id="IPR006009">
    <property type="entry name" value="GlcNAc_MurG"/>
</dbReference>
<dbReference type="InterPro" id="IPR007235">
    <property type="entry name" value="Glyco_trans_28_C"/>
</dbReference>
<dbReference type="InterPro" id="IPR004276">
    <property type="entry name" value="GlycoTrans_28_N"/>
</dbReference>
<dbReference type="NCBIfam" id="TIGR01133">
    <property type="entry name" value="murG"/>
    <property type="match status" value="1"/>
</dbReference>
<dbReference type="PANTHER" id="PTHR21015:SF22">
    <property type="entry name" value="GLYCOSYLTRANSFERASE"/>
    <property type="match status" value="1"/>
</dbReference>
<dbReference type="PANTHER" id="PTHR21015">
    <property type="entry name" value="UDP-N-ACETYLGLUCOSAMINE--N-ACETYLMURAMYL-(PENTAPEPTIDE) PYROPHOSPHORYL-UNDECAPRENOL N-ACETYLGLUCOSAMINE TRANSFERASE 1"/>
    <property type="match status" value="1"/>
</dbReference>
<dbReference type="Pfam" id="PF04101">
    <property type="entry name" value="Glyco_tran_28_C"/>
    <property type="match status" value="1"/>
</dbReference>
<dbReference type="Pfam" id="PF03033">
    <property type="entry name" value="Glyco_transf_28"/>
    <property type="match status" value="1"/>
</dbReference>
<dbReference type="SUPFAM" id="SSF53756">
    <property type="entry name" value="UDP-Glycosyltransferase/glycogen phosphorylase"/>
    <property type="match status" value="1"/>
</dbReference>